<protein>
    <recommendedName>
        <fullName evidence="1">Argininosuccinate lyase</fullName>
        <shortName evidence="1">ASAL</shortName>
        <ecNumber evidence="1">4.3.2.1</ecNumber>
    </recommendedName>
    <alternativeName>
        <fullName evidence="1">Arginosuccinase</fullName>
    </alternativeName>
</protein>
<reference key="1">
    <citation type="journal article" date="2005" name="BMC Genomics">
        <title>Bacterial genome adaptation to niches: divergence of the potential virulence genes in three Burkholderia species of different survival strategies.</title>
        <authorList>
            <person name="Kim H.S."/>
            <person name="Schell M.A."/>
            <person name="Yu Y."/>
            <person name="Ulrich R.L."/>
            <person name="Sarria S.H."/>
            <person name="Nierman W.C."/>
            <person name="DeShazer D."/>
        </authorList>
    </citation>
    <scope>NUCLEOTIDE SEQUENCE [LARGE SCALE GENOMIC DNA]</scope>
    <source>
        <strain>ATCC 700388 / DSM 13276 / CCUG 48851 / CIP 106301 / E264</strain>
    </source>
</reference>
<accession>Q2T079</accession>
<sequence length="469" mass="51099">MTSQLHKKGEAWSARFSEPMSELVKRYTSSVFFDKRLALVDIAGSLAHAGMLAAQKIISADDLAAIEHGMAQIKGEIERGEFEWQLDLEDVHLNIEARLTALIGDAGKRLHTGRSRNDQVATDIRLWLRGEIDRIGGLLNDLRGALIDLAEQNADTILPGFTHLQVAQPVTFGHHLLAYVEMFSRDAERMRDCRARVNRLPLGAAALAGTSYPIDRHAVAKTLGFDGICANSLDAVSDRDFAIEFTAAAALVMTHVSRFSEELVLWMSPRVGFIDIADRFCTGSSIMPQKKNPDVPELARGKTGRVNGHLMALLTLMKGQPLAYNKDNQEDKEPLFDTVDTVADTLRIFAEMVAGITVKPDAMRAAALQGFSTATDLADYLVKRGLPFRDAHEAVAHAVKICDARGIDLADLTLDEMKQELPNVAHLIGSDVFDYLTLEGSVASRSHPGGTAPDQVRAAAKAARAALGK</sequence>
<comment type="catalytic activity">
    <reaction evidence="1">
        <text>2-(N(omega)-L-arginino)succinate = fumarate + L-arginine</text>
        <dbReference type="Rhea" id="RHEA:24020"/>
        <dbReference type="ChEBI" id="CHEBI:29806"/>
        <dbReference type="ChEBI" id="CHEBI:32682"/>
        <dbReference type="ChEBI" id="CHEBI:57472"/>
        <dbReference type="EC" id="4.3.2.1"/>
    </reaction>
</comment>
<comment type="pathway">
    <text evidence="1">Amino-acid biosynthesis; L-arginine biosynthesis; L-arginine from L-ornithine and carbamoyl phosphate: step 3/3.</text>
</comment>
<comment type="subcellular location">
    <subcellularLocation>
        <location evidence="1">Cytoplasm</location>
    </subcellularLocation>
</comment>
<comment type="similarity">
    <text evidence="1">Belongs to the lyase 1 family. Argininosuccinate lyase subfamily.</text>
</comment>
<feature type="chain" id="PRO_0000240719" description="Argininosuccinate lyase">
    <location>
        <begin position="1"/>
        <end position="469"/>
    </location>
</feature>
<proteinExistence type="inferred from homology"/>
<keyword id="KW-0028">Amino-acid biosynthesis</keyword>
<keyword id="KW-0055">Arginine biosynthesis</keyword>
<keyword id="KW-0963">Cytoplasm</keyword>
<keyword id="KW-0456">Lyase</keyword>
<name>ARLY_BURTA</name>
<organism>
    <name type="scientific">Burkholderia thailandensis (strain ATCC 700388 / DSM 13276 / CCUG 48851 / CIP 106301 / E264)</name>
    <dbReference type="NCBI Taxonomy" id="271848"/>
    <lineage>
        <taxon>Bacteria</taxon>
        <taxon>Pseudomonadati</taxon>
        <taxon>Pseudomonadota</taxon>
        <taxon>Betaproteobacteria</taxon>
        <taxon>Burkholderiales</taxon>
        <taxon>Burkholderiaceae</taxon>
        <taxon>Burkholderia</taxon>
        <taxon>pseudomallei group</taxon>
    </lineage>
</organism>
<gene>
    <name evidence="1" type="primary">argH</name>
    <name type="ordered locus">BTH_I0864</name>
</gene>
<evidence type="ECO:0000255" key="1">
    <source>
        <dbReference type="HAMAP-Rule" id="MF_00006"/>
    </source>
</evidence>
<dbReference type="EC" id="4.3.2.1" evidence="1"/>
<dbReference type="EMBL" id="CP000086">
    <property type="protein sequence ID" value="ABC38364.1"/>
    <property type="molecule type" value="Genomic_DNA"/>
</dbReference>
<dbReference type="RefSeq" id="WP_009892473.1">
    <property type="nucleotide sequence ID" value="NC_007651.1"/>
</dbReference>
<dbReference type="SMR" id="Q2T079"/>
<dbReference type="GeneID" id="45120619"/>
<dbReference type="KEGG" id="bte:BTH_I0864"/>
<dbReference type="HOGENOM" id="CLU_027272_2_3_4"/>
<dbReference type="UniPathway" id="UPA00068">
    <property type="reaction ID" value="UER00114"/>
</dbReference>
<dbReference type="Proteomes" id="UP000001930">
    <property type="component" value="Chromosome I"/>
</dbReference>
<dbReference type="GO" id="GO:0005829">
    <property type="term" value="C:cytosol"/>
    <property type="evidence" value="ECO:0007669"/>
    <property type="project" value="TreeGrafter"/>
</dbReference>
<dbReference type="GO" id="GO:0004056">
    <property type="term" value="F:argininosuccinate lyase activity"/>
    <property type="evidence" value="ECO:0007669"/>
    <property type="project" value="UniProtKB-UniRule"/>
</dbReference>
<dbReference type="GO" id="GO:0042450">
    <property type="term" value="P:arginine biosynthetic process via ornithine"/>
    <property type="evidence" value="ECO:0007669"/>
    <property type="project" value="InterPro"/>
</dbReference>
<dbReference type="GO" id="GO:0006526">
    <property type="term" value="P:L-arginine biosynthetic process"/>
    <property type="evidence" value="ECO:0007669"/>
    <property type="project" value="UniProtKB-UniRule"/>
</dbReference>
<dbReference type="CDD" id="cd01359">
    <property type="entry name" value="Argininosuccinate_lyase"/>
    <property type="match status" value="1"/>
</dbReference>
<dbReference type="FunFam" id="1.10.275.10:FF:000002">
    <property type="entry name" value="Argininosuccinate lyase"/>
    <property type="match status" value="1"/>
</dbReference>
<dbReference type="FunFam" id="1.10.40.30:FF:000001">
    <property type="entry name" value="Argininosuccinate lyase"/>
    <property type="match status" value="1"/>
</dbReference>
<dbReference type="FunFam" id="1.20.200.10:FF:000015">
    <property type="entry name" value="argininosuccinate lyase isoform X2"/>
    <property type="match status" value="1"/>
</dbReference>
<dbReference type="Gene3D" id="1.10.40.30">
    <property type="entry name" value="Fumarase/aspartase (C-terminal domain)"/>
    <property type="match status" value="1"/>
</dbReference>
<dbReference type="Gene3D" id="1.20.200.10">
    <property type="entry name" value="Fumarase/aspartase (Central domain)"/>
    <property type="match status" value="1"/>
</dbReference>
<dbReference type="Gene3D" id="1.10.275.10">
    <property type="entry name" value="Fumarase/aspartase (N-terminal domain)"/>
    <property type="match status" value="1"/>
</dbReference>
<dbReference type="HAMAP" id="MF_00006">
    <property type="entry name" value="Arg_succ_lyase"/>
    <property type="match status" value="1"/>
</dbReference>
<dbReference type="InterPro" id="IPR029419">
    <property type="entry name" value="Arg_succ_lyase_C"/>
</dbReference>
<dbReference type="InterPro" id="IPR009049">
    <property type="entry name" value="Argininosuccinate_lyase"/>
</dbReference>
<dbReference type="InterPro" id="IPR024083">
    <property type="entry name" value="Fumarase/histidase_N"/>
</dbReference>
<dbReference type="InterPro" id="IPR020557">
    <property type="entry name" value="Fumarate_lyase_CS"/>
</dbReference>
<dbReference type="InterPro" id="IPR000362">
    <property type="entry name" value="Fumarate_lyase_fam"/>
</dbReference>
<dbReference type="InterPro" id="IPR022761">
    <property type="entry name" value="Fumarate_lyase_N"/>
</dbReference>
<dbReference type="InterPro" id="IPR008948">
    <property type="entry name" value="L-Aspartase-like"/>
</dbReference>
<dbReference type="NCBIfam" id="TIGR00838">
    <property type="entry name" value="argH"/>
    <property type="match status" value="1"/>
</dbReference>
<dbReference type="PANTHER" id="PTHR43814">
    <property type="entry name" value="ARGININOSUCCINATE LYASE"/>
    <property type="match status" value="1"/>
</dbReference>
<dbReference type="PANTHER" id="PTHR43814:SF1">
    <property type="entry name" value="ARGININOSUCCINATE LYASE"/>
    <property type="match status" value="1"/>
</dbReference>
<dbReference type="Pfam" id="PF14698">
    <property type="entry name" value="ASL_C2"/>
    <property type="match status" value="1"/>
</dbReference>
<dbReference type="Pfam" id="PF00206">
    <property type="entry name" value="Lyase_1"/>
    <property type="match status" value="1"/>
</dbReference>
<dbReference type="PRINTS" id="PR00145">
    <property type="entry name" value="ARGSUCLYASE"/>
</dbReference>
<dbReference type="PRINTS" id="PR00149">
    <property type="entry name" value="FUMRATELYASE"/>
</dbReference>
<dbReference type="SUPFAM" id="SSF48557">
    <property type="entry name" value="L-aspartase-like"/>
    <property type="match status" value="1"/>
</dbReference>
<dbReference type="PROSITE" id="PS00163">
    <property type="entry name" value="FUMARATE_LYASES"/>
    <property type="match status" value="1"/>
</dbReference>